<sequence length="831" mass="93168">MSMARRDFIKQTAAAAAATVAGVPLTGYTQNIVTESEAAKLKWSKAPCRFCGTGCGVNVAVKDNQVVATHGDFNAEVNKGLNCVKGYFLSKIMYGSDRLTQPLLRIKDGKYAKDGEFAPVSWDQAFDVMAEQFKRVLKDKGPEAVGMFGSGQWTVWEGYAALKLMKAGFRTNNLDPNARHCMASAAVGFMRTFGADEPMGCYDDIENADAFVLWGSNMAEMHPILWTRVTDRRLSAPATKVAVLSTFEHRSYELADLTLTFEPQSDLAILNYIANHIIRTKRVNRDFVDKHTVFREGNADIGYGLRPEHPLQQAARNAGDAGGSKPITFDDFARFVSKYDLEYTAKLSGVPKNRLEELAELYADPKVRVTSFWTMGFNQHTRGVWCNNMVYNIHLLTGKISTPGNSPFSLTGQPSACGTAREVGTFSHRLPADLVVTNPEHRRHAEEIWKLPDGTIPSKVGAHAVLQNRMLKDGKINAYWVMVNNNMQAAANLMNEGLPGYRNPENFIVVSDAYPTVTTLSADLILPAAMWVEKEGAYGNAERRTQFWHQLVDAPGQARSDLWQLVEFSKRFKVEEVWPADLLAKKPEYRGKTLYDVLFANGKVNQFPNTELDPEYANQEAQAFGFYLQKGLFEEYAEFGRGHGHDLAPFDVYHKARGLRWPVVDGKETLWRYREGSDPYVKPGTGFQFYGNPDGKAVIFALPYEPPPEAPDKEYPFWLSTGRVLEHWHSGSMTRRVPELYKAFPEAVCFMHPDDAQALGVRRGVEVEVVSRRGKMRTRVETRGRDKPPRGLVFVPWFDAGQLINKVTLDATDPISFQTDFKKCAVKIVKV</sequence>
<organism>
    <name type="scientific">Bordetella parapertussis (strain 12822 / ATCC BAA-587 / NCTC 13253)</name>
    <dbReference type="NCBI Taxonomy" id="257311"/>
    <lineage>
        <taxon>Bacteria</taxon>
        <taxon>Pseudomonadati</taxon>
        <taxon>Pseudomonadota</taxon>
        <taxon>Betaproteobacteria</taxon>
        <taxon>Burkholderiales</taxon>
        <taxon>Alcaligenaceae</taxon>
        <taxon>Bordetella</taxon>
    </lineage>
</organism>
<reference key="1">
    <citation type="journal article" date="2003" name="Nat. Genet.">
        <title>Comparative analysis of the genome sequences of Bordetella pertussis, Bordetella parapertussis and Bordetella bronchiseptica.</title>
        <authorList>
            <person name="Parkhill J."/>
            <person name="Sebaihia M."/>
            <person name="Preston A."/>
            <person name="Murphy L.D."/>
            <person name="Thomson N.R."/>
            <person name="Harris D.E."/>
            <person name="Holden M.T.G."/>
            <person name="Churcher C.M."/>
            <person name="Bentley S.D."/>
            <person name="Mungall K.L."/>
            <person name="Cerdeno-Tarraga A.-M."/>
            <person name="Temple L."/>
            <person name="James K.D."/>
            <person name="Harris B."/>
            <person name="Quail M.A."/>
            <person name="Achtman M."/>
            <person name="Atkin R."/>
            <person name="Baker S."/>
            <person name="Basham D."/>
            <person name="Bason N."/>
            <person name="Cherevach I."/>
            <person name="Chillingworth T."/>
            <person name="Collins M."/>
            <person name="Cronin A."/>
            <person name="Davis P."/>
            <person name="Doggett J."/>
            <person name="Feltwell T."/>
            <person name="Goble A."/>
            <person name="Hamlin N."/>
            <person name="Hauser H."/>
            <person name="Holroyd S."/>
            <person name="Jagels K."/>
            <person name="Leather S."/>
            <person name="Moule S."/>
            <person name="Norberczak H."/>
            <person name="O'Neil S."/>
            <person name="Ormond D."/>
            <person name="Price C."/>
            <person name="Rabbinowitsch E."/>
            <person name="Rutter S."/>
            <person name="Sanders M."/>
            <person name="Saunders D."/>
            <person name="Seeger K."/>
            <person name="Sharp S."/>
            <person name="Simmonds M."/>
            <person name="Skelton J."/>
            <person name="Squares R."/>
            <person name="Squares S."/>
            <person name="Stevens K."/>
            <person name="Unwin L."/>
            <person name="Whitehead S."/>
            <person name="Barrell B.G."/>
            <person name="Maskell D.J."/>
        </authorList>
    </citation>
    <scope>NUCLEOTIDE SEQUENCE [LARGE SCALE GENOMIC DNA]</scope>
    <source>
        <strain>12822 / ATCC BAA-587 / NCTC 13253</strain>
    </source>
</reference>
<evidence type="ECO:0000255" key="1">
    <source>
        <dbReference type="HAMAP-Rule" id="MF_01630"/>
    </source>
</evidence>
<accession>Q7W733</accession>
<protein>
    <recommendedName>
        <fullName evidence="1">Periplasmic nitrate reductase</fullName>
        <ecNumber evidence="1">1.9.6.1</ecNumber>
    </recommendedName>
</protein>
<feature type="signal peptide" description="Tat-type signal" evidence="1">
    <location>
        <begin position="1"/>
        <end position="38"/>
    </location>
</feature>
<feature type="chain" id="PRO_0000045978" description="Periplasmic nitrate reductase" evidence="1">
    <location>
        <begin position="39"/>
        <end position="831"/>
    </location>
</feature>
<feature type="domain" description="4Fe-4S Mo/W bis-MGD-type" evidence="1">
    <location>
        <begin position="41"/>
        <end position="97"/>
    </location>
</feature>
<feature type="binding site" evidence="1">
    <location>
        <position position="48"/>
    </location>
    <ligand>
        <name>[4Fe-4S] cluster</name>
        <dbReference type="ChEBI" id="CHEBI:49883"/>
    </ligand>
</feature>
<feature type="binding site" evidence="1">
    <location>
        <position position="51"/>
    </location>
    <ligand>
        <name>[4Fe-4S] cluster</name>
        <dbReference type="ChEBI" id="CHEBI:49883"/>
    </ligand>
</feature>
<feature type="binding site" evidence="1">
    <location>
        <position position="55"/>
    </location>
    <ligand>
        <name>[4Fe-4S] cluster</name>
        <dbReference type="ChEBI" id="CHEBI:49883"/>
    </ligand>
</feature>
<feature type="binding site" evidence="1">
    <location>
        <position position="83"/>
    </location>
    <ligand>
        <name>[4Fe-4S] cluster</name>
        <dbReference type="ChEBI" id="CHEBI:49883"/>
    </ligand>
</feature>
<feature type="binding site" evidence="1">
    <location>
        <position position="85"/>
    </location>
    <ligand>
        <name>Mo-bis(molybdopterin guanine dinucleotide)</name>
        <dbReference type="ChEBI" id="CHEBI:60539"/>
    </ligand>
</feature>
<feature type="binding site" evidence="1">
    <location>
        <position position="152"/>
    </location>
    <ligand>
        <name>Mo-bis(molybdopterin guanine dinucleotide)</name>
        <dbReference type="ChEBI" id="CHEBI:60539"/>
    </ligand>
</feature>
<feature type="binding site" evidence="1">
    <location>
        <position position="177"/>
    </location>
    <ligand>
        <name>Mo-bis(molybdopterin guanine dinucleotide)</name>
        <dbReference type="ChEBI" id="CHEBI:60539"/>
    </ligand>
</feature>
<feature type="binding site" evidence="1">
    <location>
        <position position="181"/>
    </location>
    <ligand>
        <name>Mo-bis(molybdopterin guanine dinucleotide)</name>
        <dbReference type="ChEBI" id="CHEBI:60539"/>
    </ligand>
</feature>
<feature type="binding site" evidence="1">
    <location>
        <begin position="214"/>
        <end position="221"/>
    </location>
    <ligand>
        <name>Mo-bis(molybdopterin guanine dinucleotide)</name>
        <dbReference type="ChEBI" id="CHEBI:60539"/>
    </ligand>
</feature>
<feature type="binding site" evidence="1">
    <location>
        <begin position="245"/>
        <end position="249"/>
    </location>
    <ligand>
        <name>Mo-bis(molybdopterin guanine dinucleotide)</name>
        <dbReference type="ChEBI" id="CHEBI:60539"/>
    </ligand>
</feature>
<feature type="binding site" evidence="1">
    <location>
        <begin position="264"/>
        <end position="266"/>
    </location>
    <ligand>
        <name>Mo-bis(molybdopterin guanine dinucleotide)</name>
        <dbReference type="ChEBI" id="CHEBI:60539"/>
    </ligand>
</feature>
<feature type="binding site" evidence="1">
    <location>
        <position position="375"/>
    </location>
    <ligand>
        <name>Mo-bis(molybdopterin guanine dinucleotide)</name>
        <dbReference type="ChEBI" id="CHEBI:60539"/>
    </ligand>
</feature>
<feature type="binding site" evidence="1">
    <location>
        <position position="379"/>
    </location>
    <ligand>
        <name>Mo-bis(molybdopterin guanine dinucleotide)</name>
        <dbReference type="ChEBI" id="CHEBI:60539"/>
    </ligand>
</feature>
<feature type="binding site" evidence="1">
    <location>
        <position position="485"/>
    </location>
    <ligand>
        <name>Mo-bis(molybdopterin guanine dinucleotide)</name>
        <dbReference type="ChEBI" id="CHEBI:60539"/>
    </ligand>
</feature>
<feature type="binding site" evidence="1">
    <location>
        <begin position="511"/>
        <end position="512"/>
    </location>
    <ligand>
        <name>Mo-bis(molybdopterin guanine dinucleotide)</name>
        <dbReference type="ChEBI" id="CHEBI:60539"/>
    </ligand>
</feature>
<feature type="binding site" evidence="1">
    <location>
        <position position="534"/>
    </location>
    <ligand>
        <name>Mo-bis(molybdopterin guanine dinucleotide)</name>
        <dbReference type="ChEBI" id="CHEBI:60539"/>
    </ligand>
</feature>
<feature type="binding site" evidence="1">
    <location>
        <position position="561"/>
    </location>
    <ligand>
        <name>Mo-bis(molybdopterin guanine dinucleotide)</name>
        <dbReference type="ChEBI" id="CHEBI:60539"/>
    </ligand>
</feature>
<feature type="binding site" evidence="1">
    <location>
        <begin position="721"/>
        <end position="730"/>
    </location>
    <ligand>
        <name>Mo-bis(molybdopterin guanine dinucleotide)</name>
        <dbReference type="ChEBI" id="CHEBI:60539"/>
    </ligand>
</feature>
<feature type="binding site" evidence="1">
    <location>
        <position position="797"/>
    </location>
    <ligand>
        <name>substrate</name>
    </ligand>
</feature>
<feature type="binding site" evidence="1">
    <location>
        <position position="805"/>
    </location>
    <ligand>
        <name>Mo-bis(molybdopterin guanine dinucleotide)</name>
        <dbReference type="ChEBI" id="CHEBI:60539"/>
    </ligand>
</feature>
<feature type="binding site" evidence="1">
    <location>
        <position position="822"/>
    </location>
    <ligand>
        <name>Mo-bis(molybdopterin guanine dinucleotide)</name>
        <dbReference type="ChEBI" id="CHEBI:60539"/>
    </ligand>
</feature>
<comment type="function">
    <text evidence="1">Catalytic subunit of the periplasmic nitrate reductase complex NapAB. Receives electrons from NapB and catalyzes the reduction of nitrate to nitrite.</text>
</comment>
<comment type="catalytic activity">
    <reaction evidence="1">
        <text>2 Fe(II)-[cytochrome] + nitrate + 2 H(+) = 2 Fe(III)-[cytochrome] + nitrite + H2O</text>
        <dbReference type="Rhea" id="RHEA:12909"/>
        <dbReference type="Rhea" id="RHEA-COMP:11777"/>
        <dbReference type="Rhea" id="RHEA-COMP:11778"/>
        <dbReference type="ChEBI" id="CHEBI:15377"/>
        <dbReference type="ChEBI" id="CHEBI:15378"/>
        <dbReference type="ChEBI" id="CHEBI:16301"/>
        <dbReference type="ChEBI" id="CHEBI:17632"/>
        <dbReference type="ChEBI" id="CHEBI:29033"/>
        <dbReference type="ChEBI" id="CHEBI:29034"/>
        <dbReference type="EC" id="1.9.6.1"/>
    </reaction>
</comment>
<comment type="cofactor">
    <cofactor evidence="1">
        <name>[4Fe-4S] cluster</name>
        <dbReference type="ChEBI" id="CHEBI:49883"/>
    </cofactor>
    <text evidence="1">Binds 1 [4Fe-4S] cluster.</text>
</comment>
<comment type="cofactor">
    <cofactor evidence="1">
        <name>Mo-bis(molybdopterin guanine dinucleotide)</name>
        <dbReference type="ChEBI" id="CHEBI:60539"/>
    </cofactor>
    <text evidence="1">Binds 1 molybdenum-bis(molybdopterin guanine dinucleotide) (Mo-bis-MGD) cofactor per subunit.</text>
</comment>
<comment type="subunit">
    <text evidence="1">Component of the periplasmic nitrate reductase NapAB complex composed of NapA and NapB.</text>
</comment>
<comment type="subcellular location">
    <subcellularLocation>
        <location evidence="1">Periplasm</location>
    </subcellularLocation>
</comment>
<comment type="PTM">
    <text evidence="1">Predicted to be exported by the Tat system. The position of the signal peptide cleavage has not been experimentally proven.</text>
</comment>
<comment type="similarity">
    <text evidence="1">Belongs to the prokaryotic molybdopterin-containing oxidoreductase family. NasA/NapA/NarB subfamily.</text>
</comment>
<dbReference type="EC" id="1.9.6.1" evidence="1"/>
<dbReference type="EMBL" id="BX640431">
    <property type="protein sequence ID" value="CAE37995.1"/>
    <property type="molecule type" value="Genomic_DNA"/>
</dbReference>
<dbReference type="RefSeq" id="WP_010928685.1">
    <property type="nucleotide sequence ID" value="NC_002928.3"/>
</dbReference>
<dbReference type="SMR" id="Q7W733"/>
<dbReference type="GeneID" id="93204487"/>
<dbReference type="KEGG" id="bpa:BPP2702"/>
<dbReference type="HOGENOM" id="CLU_000422_13_4_4"/>
<dbReference type="Proteomes" id="UP000001421">
    <property type="component" value="Chromosome"/>
</dbReference>
<dbReference type="GO" id="GO:0016020">
    <property type="term" value="C:membrane"/>
    <property type="evidence" value="ECO:0007669"/>
    <property type="project" value="TreeGrafter"/>
</dbReference>
<dbReference type="GO" id="GO:0009325">
    <property type="term" value="C:nitrate reductase complex"/>
    <property type="evidence" value="ECO:0007669"/>
    <property type="project" value="TreeGrafter"/>
</dbReference>
<dbReference type="GO" id="GO:0042597">
    <property type="term" value="C:periplasmic space"/>
    <property type="evidence" value="ECO:0007669"/>
    <property type="project" value="UniProtKB-SubCell"/>
</dbReference>
<dbReference type="GO" id="GO:0051539">
    <property type="term" value="F:4 iron, 4 sulfur cluster binding"/>
    <property type="evidence" value="ECO:0007669"/>
    <property type="project" value="UniProtKB-KW"/>
</dbReference>
<dbReference type="GO" id="GO:0009055">
    <property type="term" value="F:electron transfer activity"/>
    <property type="evidence" value="ECO:0007669"/>
    <property type="project" value="UniProtKB-UniRule"/>
</dbReference>
<dbReference type="GO" id="GO:0005506">
    <property type="term" value="F:iron ion binding"/>
    <property type="evidence" value="ECO:0007669"/>
    <property type="project" value="UniProtKB-UniRule"/>
</dbReference>
<dbReference type="GO" id="GO:0030151">
    <property type="term" value="F:molybdenum ion binding"/>
    <property type="evidence" value="ECO:0007669"/>
    <property type="project" value="InterPro"/>
</dbReference>
<dbReference type="GO" id="GO:0043546">
    <property type="term" value="F:molybdopterin cofactor binding"/>
    <property type="evidence" value="ECO:0007669"/>
    <property type="project" value="InterPro"/>
</dbReference>
<dbReference type="GO" id="GO:0050140">
    <property type="term" value="F:nitrate reductase (cytochrome) activity"/>
    <property type="evidence" value="ECO:0007669"/>
    <property type="project" value="UniProtKB-EC"/>
</dbReference>
<dbReference type="GO" id="GO:0045333">
    <property type="term" value="P:cellular respiration"/>
    <property type="evidence" value="ECO:0007669"/>
    <property type="project" value="UniProtKB-ARBA"/>
</dbReference>
<dbReference type="GO" id="GO:0006777">
    <property type="term" value="P:Mo-molybdopterin cofactor biosynthetic process"/>
    <property type="evidence" value="ECO:0007669"/>
    <property type="project" value="UniProtKB-UniRule"/>
</dbReference>
<dbReference type="GO" id="GO:0042128">
    <property type="term" value="P:nitrate assimilation"/>
    <property type="evidence" value="ECO:0007669"/>
    <property type="project" value="UniProtKB-UniRule"/>
</dbReference>
<dbReference type="CDD" id="cd02791">
    <property type="entry name" value="MopB_CT_Nitrate-R-NapA-like"/>
    <property type="match status" value="1"/>
</dbReference>
<dbReference type="CDD" id="cd02754">
    <property type="entry name" value="MopB_Nitrate-R-NapA-like"/>
    <property type="match status" value="1"/>
</dbReference>
<dbReference type="FunFam" id="2.40.40.20:FF:000005">
    <property type="entry name" value="Periplasmic nitrate reductase"/>
    <property type="match status" value="1"/>
</dbReference>
<dbReference type="Gene3D" id="2.40.40.20">
    <property type="match status" value="1"/>
</dbReference>
<dbReference type="Gene3D" id="3.30.200.210">
    <property type="match status" value="1"/>
</dbReference>
<dbReference type="Gene3D" id="3.40.50.740">
    <property type="match status" value="1"/>
</dbReference>
<dbReference type="Gene3D" id="3.40.228.10">
    <property type="entry name" value="Dimethylsulfoxide Reductase, domain 2"/>
    <property type="match status" value="1"/>
</dbReference>
<dbReference type="HAMAP" id="MF_01630">
    <property type="entry name" value="Nitrate_reduct_NapA"/>
    <property type="match status" value="1"/>
</dbReference>
<dbReference type="InterPro" id="IPR009010">
    <property type="entry name" value="Asp_de-COase-like_dom_sf"/>
</dbReference>
<dbReference type="InterPro" id="IPR041957">
    <property type="entry name" value="CT_Nitrate-R-NapA-like"/>
</dbReference>
<dbReference type="InterPro" id="IPR006657">
    <property type="entry name" value="MoPterin_dinucl-bd_dom"/>
</dbReference>
<dbReference type="InterPro" id="IPR006656">
    <property type="entry name" value="Mopterin_OxRdtase"/>
</dbReference>
<dbReference type="InterPro" id="IPR006963">
    <property type="entry name" value="Mopterin_OxRdtase_4Fe-4S_dom"/>
</dbReference>
<dbReference type="InterPro" id="IPR027467">
    <property type="entry name" value="MopterinOxRdtase_cofactor_BS"/>
</dbReference>
<dbReference type="InterPro" id="IPR010051">
    <property type="entry name" value="Periplasm_NO3_reductase_lsu"/>
</dbReference>
<dbReference type="InterPro" id="IPR050123">
    <property type="entry name" value="Prok_molybdopt-oxidoreductase"/>
</dbReference>
<dbReference type="InterPro" id="IPR006311">
    <property type="entry name" value="TAT_signal"/>
</dbReference>
<dbReference type="InterPro" id="IPR019546">
    <property type="entry name" value="TAT_signal_bac_arc"/>
</dbReference>
<dbReference type="NCBIfam" id="TIGR01706">
    <property type="entry name" value="NAPA"/>
    <property type="match status" value="1"/>
</dbReference>
<dbReference type="NCBIfam" id="NF010055">
    <property type="entry name" value="PRK13532.1"/>
    <property type="match status" value="1"/>
</dbReference>
<dbReference type="NCBIfam" id="TIGR01409">
    <property type="entry name" value="TAT_signal_seq"/>
    <property type="match status" value="1"/>
</dbReference>
<dbReference type="PANTHER" id="PTHR43105:SF11">
    <property type="entry name" value="PERIPLASMIC NITRATE REDUCTASE"/>
    <property type="match status" value="1"/>
</dbReference>
<dbReference type="PANTHER" id="PTHR43105">
    <property type="entry name" value="RESPIRATORY NITRATE REDUCTASE"/>
    <property type="match status" value="1"/>
</dbReference>
<dbReference type="Pfam" id="PF04879">
    <property type="entry name" value="Molybdop_Fe4S4"/>
    <property type="match status" value="1"/>
</dbReference>
<dbReference type="Pfam" id="PF00384">
    <property type="entry name" value="Molybdopterin"/>
    <property type="match status" value="1"/>
</dbReference>
<dbReference type="Pfam" id="PF01568">
    <property type="entry name" value="Molydop_binding"/>
    <property type="match status" value="1"/>
</dbReference>
<dbReference type="SMART" id="SM00926">
    <property type="entry name" value="Molybdop_Fe4S4"/>
    <property type="match status" value="1"/>
</dbReference>
<dbReference type="SUPFAM" id="SSF50692">
    <property type="entry name" value="ADC-like"/>
    <property type="match status" value="1"/>
</dbReference>
<dbReference type="SUPFAM" id="SSF53706">
    <property type="entry name" value="Formate dehydrogenase/DMSO reductase, domains 1-3"/>
    <property type="match status" value="1"/>
</dbReference>
<dbReference type="PROSITE" id="PS51669">
    <property type="entry name" value="4FE4S_MOW_BIS_MGD"/>
    <property type="match status" value="1"/>
</dbReference>
<dbReference type="PROSITE" id="PS00551">
    <property type="entry name" value="MOLYBDOPTERIN_PROK_1"/>
    <property type="match status" value="1"/>
</dbReference>
<dbReference type="PROSITE" id="PS51318">
    <property type="entry name" value="TAT"/>
    <property type="match status" value="1"/>
</dbReference>
<proteinExistence type="inferred from homology"/>
<name>NAPA_BORPA</name>
<gene>
    <name evidence="1" type="primary">napA</name>
    <name type="ordered locus">BPP2702</name>
</gene>
<keyword id="KW-0004">4Fe-4S</keyword>
<keyword id="KW-0249">Electron transport</keyword>
<keyword id="KW-0408">Iron</keyword>
<keyword id="KW-0411">Iron-sulfur</keyword>
<keyword id="KW-0479">Metal-binding</keyword>
<keyword id="KW-0500">Molybdenum</keyword>
<keyword id="KW-0534">Nitrate assimilation</keyword>
<keyword id="KW-0560">Oxidoreductase</keyword>
<keyword id="KW-0574">Periplasm</keyword>
<keyword id="KW-0732">Signal</keyword>
<keyword id="KW-0813">Transport</keyword>